<proteinExistence type="inferred from homology"/>
<protein>
    <recommendedName>
        <fullName>Uncharacterized protein MPN_039</fullName>
    </recommendedName>
</protein>
<sequence length="338" mass="38899">MTKLPKLLLGLTFSVSLIPFSSLLITSTDVNKQPVPTALQRTGASAIHEGSFQTITLGQSLMEQIEQLQQFTPAQRFTQFKKKFPNQKLLSQSELSPVDVYNFLSGWQDALVSFLDRVIKLQGKVKEANEIFNPNVGDQIVLPKKENPNVLEVLGEYNGFGFFPTLGKNGLNLPQQIFENFTDFKVESYQINDFKVSLVGERDIIKNDKVRFSYAVQIPLNLELLVNNQKVTFNITVDLRTNNFSTQETFNDLFNNGTAPTNWQFFSRIKVNKLHYDQTDATHLANTLLQDQFNALNLDLQKSIYDLNLDDLEERFEEEYAKPLREKRTQQKKEWEEE</sequence>
<accession>P75075</accession>
<keyword id="KW-1185">Reference proteome</keyword>
<reference key="1">
    <citation type="journal article" date="1996" name="Nucleic Acids Res.">
        <title>Complete sequence analysis of the genome of the bacterium Mycoplasma pneumoniae.</title>
        <authorList>
            <person name="Himmelreich R."/>
            <person name="Hilbert H."/>
            <person name="Plagens H."/>
            <person name="Pirkl E."/>
            <person name="Li B.-C."/>
            <person name="Herrmann R."/>
        </authorList>
    </citation>
    <scope>NUCLEOTIDE SEQUENCE [LARGE SCALE GENOMIC DNA]</scope>
    <source>
        <strain>ATCC 29342 / M129 / Subtype 1</strain>
    </source>
</reference>
<feature type="chain" id="PRO_0000215249" description="Uncharacterized protein MPN_039">
    <location>
        <begin position="1"/>
        <end position="338"/>
    </location>
</feature>
<evidence type="ECO:0000305" key="1"/>
<name>Y039_MYCPN</name>
<gene>
    <name type="ordered locus">MPN_039</name>
    <name type="ORF">B01_orf338</name>
    <name type="ORF">MP115</name>
</gene>
<comment type="similarity">
    <text evidence="1">Belongs to the MG032/MG096/MG288 family.</text>
</comment>
<organism>
    <name type="scientific">Mycoplasma pneumoniae (strain ATCC 29342 / M129 / Subtype 1)</name>
    <name type="common">Mycoplasmoides pneumoniae</name>
    <dbReference type="NCBI Taxonomy" id="272634"/>
    <lineage>
        <taxon>Bacteria</taxon>
        <taxon>Bacillati</taxon>
        <taxon>Mycoplasmatota</taxon>
        <taxon>Mycoplasmoidales</taxon>
        <taxon>Mycoplasmoidaceae</taxon>
        <taxon>Mycoplasmoides</taxon>
    </lineage>
</organism>
<dbReference type="EMBL" id="U00089">
    <property type="protein sequence ID" value="AAB95763.1"/>
    <property type="molecule type" value="Genomic_DNA"/>
</dbReference>
<dbReference type="PIR" id="S73441">
    <property type="entry name" value="S73441"/>
</dbReference>
<dbReference type="RefSeq" id="WP_010874396.1">
    <property type="nucleotide sequence ID" value="NZ_OU342337.1"/>
</dbReference>
<dbReference type="EnsemblBacteria" id="AAB95763">
    <property type="protein sequence ID" value="AAB95763"/>
    <property type="gene ID" value="MPN_039"/>
</dbReference>
<dbReference type="KEGG" id="mpn:MPN_039"/>
<dbReference type="HOGENOM" id="CLU_1004073_0_0_14"/>
<dbReference type="Proteomes" id="UP000000808">
    <property type="component" value="Chromosome"/>
</dbReference>
<dbReference type="InterPro" id="IPR004319">
    <property type="entry name" value="DUF240"/>
</dbReference>
<dbReference type="Pfam" id="PF03086">
    <property type="entry name" value="DUF240"/>
    <property type="match status" value="1"/>
</dbReference>